<protein>
    <recommendedName>
        <fullName evidence="1">D-aminoacyl-tRNA deacylase</fullName>
        <shortName evidence="1">DTD</shortName>
        <ecNumber evidence="1">3.1.1.96</ecNumber>
    </recommendedName>
    <alternativeName>
        <fullName evidence="1">Gly-tRNA(Ala) deacylase</fullName>
    </alternativeName>
</protein>
<accession>C0QT00</accession>
<feature type="chain" id="PRO_1000146206" description="D-aminoacyl-tRNA deacylase">
    <location>
        <begin position="1"/>
        <end position="147"/>
    </location>
</feature>
<feature type="short sequence motif" description="Gly-cisPro motif, important for rejection of L-amino acids" evidence="1">
    <location>
        <begin position="136"/>
        <end position="137"/>
    </location>
</feature>
<reference key="1">
    <citation type="journal article" date="2009" name="J. Bacteriol.">
        <title>Complete and draft genome sequences of six members of the Aquificales.</title>
        <authorList>
            <person name="Reysenbach A.-L."/>
            <person name="Hamamura N."/>
            <person name="Podar M."/>
            <person name="Griffiths E."/>
            <person name="Ferreira S."/>
            <person name="Hochstein R."/>
            <person name="Heidelberg J."/>
            <person name="Johnson J."/>
            <person name="Mead D."/>
            <person name="Pohorille A."/>
            <person name="Sarmiento M."/>
            <person name="Schweighofer K."/>
            <person name="Seshadri R."/>
            <person name="Voytek M.A."/>
        </authorList>
    </citation>
    <scope>NUCLEOTIDE SEQUENCE [LARGE SCALE GENOMIC DNA]</scope>
    <source>
        <strain>DSM 14350 / EX-H1</strain>
    </source>
</reference>
<organism>
    <name type="scientific">Persephonella marina (strain DSM 14350 / EX-H1)</name>
    <dbReference type="NCBI Taxonomy" id="123214"/>
    <lineage>
        <taxon>Bacteria</taxon>
        <taxon>Pseudomonadati</taxon>
        <taxon>Aquificota</taxon>
        <taxon>Aquificia</taxon>
        <taxon>Aquificales</taxon>
        <taxon>Hydrogenothermaceae</taxon>
        <taxon>Persephonella</taxon>
    </lineage>
</organism>
<sequence length="147" mass="16453">MIAVIQRVNRSYVEVDGKVVGEIGKGLNILLGVVKGDTEEDIDKLIKKIPFLRIFEDENGKMNLSVIDIKGEALVISQFTLAGSVKKGRRPSFDNAEEPERAKELYQRFVERLSEYIPVKTGVFAAHMKVFIENDGPVTFIIDSKAL</sequence>
<keyword id="KW-0963">Cytoplasm</keyword>
<keyword id="KW-0378">Hydrolase</keyword>
<keyword id="KW-1185">Reference proteome</keyword>
<keyword id="KW-0694">RNA-binding</keyword>
<keyword id="KW-0820">tRNA-binding</keyword>
<name>DTD_PERMH</name>
<comment type="function">
    <text evidence="1">An aminoacyl-tRNA editing enzyme that deacylates mischarged D-aminoacyl-tRNAs. Also deacylates mischarged glycyl-tRNA(Ala), protecting cells against glycine mischarging by AlaRS. Acts via tRNA-based rather than protein-based catalysis; rejects L-amino acids rather than detecting D-amino acids in the active site. By recycling D-aminoacyl-tRNA to D-amino acids and free tRNA molecules, this enzyme counteracts the toxicity associated with the formation of D-aminoacyl-tRNA entities in vivo and helps enforce protein L-homochirality.</text>
</comment>
<comment type="catalytic activity">
    <reaction evidence="1">
        <text>glycyl-tRNA(Ala) + H2O = tRNA(Ala) + glycine + H(+)</text>
        <dbReference type="Rhea" id="RHEA:53744"/>
        <dbReference type="Rhea" id="RHEA-COMP:9657"/>
        <dbReference type="Rhea" id="RHEA-COMP:13640"/>
        <dbReference type="ChEBI" id="CHEBI:15377"/>
        <dbReference type="ChEBI" id="CHEBI:15378"/>
        <dbReference type="ChEBI" id="CHEBI:57305"/>
        <dbReference type="ChEBI" id="CHEBI:78442"/>
        <dbReference type="ChEBI" id="CHEBI:78522"/>
        <dbReference type="EC" id="3.1.1.96"/>
    </reaction>
</comment>
<comment type="catalytic activity">
    <reaction evidence="1">
        <text>a D-aminoacyl-tRNA + H2O = a tRNA + a D-alpha-amino acid + H(+)</text>
        <dbReference type="Rhea" id="RHEA:13953"/>
        <dbReference type="Rhea" id="RHEA-COMP:10123"/>
        <dbReference type="Rhea" id="RHEA-COMP:10124"/>
        <dbReference type="ChEBI" id="CHEBI:15377"/>
        <dbReference type="ChEBI" id="CHEBI:15378"/>
        <dbReference type="ChEBI" id="CHEBI:59871"/>
        <dbReference type="ChEBI" id="CHEBI:78442"/>
        <dbReference type="ChEBI" id="CHEBI:79333"/>
        <dbReference type="EC" id="3.1.1.96"/>
    </reaction>
</comment>
<comment type="subunit">
    <text evidence="1">Homodimer.</text>
</comment>
<comment type="subcellular location">
    <subcellularLocation>
        <location evidence="1">Cytoplasm</location>
    </subcellularLocation>
</comment>
<comment type="domain">
    <text evidence="1">A Gly-cisPro motif from one monomer fits into the active site of the other monomer to allow specific chiral rejection of L-amino acids.</text>
</comment>
<comment type="similarity">
    <text evidence="1">Belongs to the DTD family.</text>
</comment>
<dbReference type="EC" id="3.1.1.96" evidence="1"/>
<dbReference type="EMBL" id="CP001230">
    <property type="protein sequence ID" value="ACO03204.1"/>
    <property type="molecule type" value="Genomic_DNA"/>
</dbReference>
<dbReference type="RefSeq" id="WP_012675443.1">
    <property type="nucleotide sequence ID" value="NC_012440.1"/>
</dbReference>
<dbReference type="SMR" id="C0QT00"/>
<dbReference type="STRING" id="123214.PERMA_0018"/>
<dbReference type="PaxDb" id="123214-PERMA_0018"/>
<dbReference type="KEGG" id="pmx:PERMA_0018"/>
<dbReference type="eggNOG" id="COG1490">
    <property type="taxonomic scope" value="Bacteria"/>
</dbReference>
<dbReference type="HOGENOM" id="CLU_076901_1_0_0"/>
<dbReference type="OrthoDB" id="9801395at2"/>
<dbReference type="Proteomes" id="UP000001366">
    <property type="component" value="Chromosome"/>
</dbReference>
<dbReference type="GO" id="GO:0005737">
    <property type="term" value="C:cytoplasm"/>
    <property type="evidence" value="ECO:0007669"/>
    <property type="project" value="UniProtKB-SubCell"/>
</dbReference>
<dbReference type="GO" id="GO:0051500">
    <property type="term" value="F:D-tyrosyl-tRNA(Tyr) deacylase activity"/>
    <property type="evidence" value="ECO:0007669"/>
    <property type="project" value="TreeGrafter"/>
</dbReference>
<dbReference type="GO" id="GO:0106026">
    <property type="term" value="F:Gly-tRNA(Ala) deacylase activity"/>
    <property type="evidence" value="ECO:0007669"/>
    <property type="project" value="UniProtKB-UniRule"/>
</dbReference>
<dbReference type="GO" id="GO:0043908">
    <property type="term" value="F:Ser(Gly)-tRNA(Ala) hydrolase activity"/>
    <property type="evidence" value="ECO:0007669"/>
    <property type="project" value="UniProtKB-UniRule"/>
</dbReference>
<dbReference type="GO" id="GO:0000049">
    <property type="term" value="F:tRNA binding"/>
    <property type="evidence" value="ECO:0007669"/>
    <property type="project" value="UniProtKB-UniRule"/>
</dbReference>
<dbReference type="GO" id="GO:0019478">
    <property type="term" value="P:D-amino acid catabolic process"/>
    <property type="evidence" value="ECO:0007669"/>
    <property type="project" value="UniProtKB-UniRule"/>
</dbReference>
<dbReference type="CDD" id="cd00563">
    <property type="entry name" value="Dtyr_deacylase"/>
    <property type="match status" value="1"/>
</dbReference>
<dbReference type="FunFam" id="3.50.80.10:FF:000001">
    <property type="entry name" value="D-aminoacyl-tRNA deacylase"/>
    <property type="match status" value="1"/>
</dbReference>
<dbReference type="Gene3D" id="3.50.80.10">
    <property type="entry name" value="D-tyrosyl-tRNA(Tyr) deacylase"/>
    <property type="match status" value="1"/>
</dbReference>
<dbReference type="HAMAP" id="MF_00518">
    <property type="entry name" value="Deacylase_Dtd"/>
    <property type="match status" value="1"/>
</dbReference>
<dbReference type="InterPro" id="IPR003732">
    <property type="entry name" value="Daa-tRNA_deacyls_DTD"/>
</dbReference>
<dbReference type="InterPro" id="IPR023509">
    <property type="entry name" value="DTD-like_sf"/>
</dbReference>
<dbReference type="NCBIfam" id="TIGR00256">
    <property type="entry name" value="D-aminoacyl-tRNA deacylase"/>
    <property type="match status" value="1"/>
</dbReference>
<dbReference type="PANTHER" id="PTHR10472:SF5">
    <property type="entry name" value="D-AMINOACYL-TRNA DEACYLASE 1"/>
    <property type="match status" value="1"/>
</dbReference>
<dbReference type="PANTHER" id="PTHR10472">
    <property type="entry name" value="D-TYROSYL-TRNA TYR DEACYLASE"/>
    <property type="match status" value="1"/>
</dbReference>
<dbReference type="Pfam" id="PF02580">
    <property type="entry name" value="Tyr_Deacylase"/>
    <property type="match status" value="1"/>
</dbReference>
<dbReference type="SUPFAM" id="SSF69500">
    <property type="entry name" value="DTD-like"/>
    <property type="match status" value="1"/>
</dbReference>
<gene>
    <name evidence="1" type="primary">dtd</name>
    <name type="ordered locus">PERMA_0018</name>
</gene>
<evidence type="ECO:0000255" key="1">
    <source>
        <dbReference type="HAMAP-Rule" id="MF_00518"/>
    </source>
</evidence>
<proteinExistence type="inferred from homology"/>